<evidence type="ECO:0000250" key="1">
    <source>
        <dbReference type="UniProtKB" id="P75796"/>
    </source>
</evidence>
<evidence type="ECO:0000255" key="2">
    <source>
        <dbReference type="PROSITE-ProRule" id="PRU00434"/>
    </source>
</evidence>
<evidence type="ECO:0000305" key="3"/>
<protein>
    <recommendedName>
        <fullName evidence="1">Glutathione import ATP-binding protein GsiA</fullName>
        <ecNumber evidence="1">7.4.2.10</ecNumber>
    </recommendedName>
</protein>
<sequence>MPHSDELDSRDVLSVSGLNIAFHHEGQQVDAVRNVSLRLKRGETLAIVGESGSGKSVTALALMRLIEQSGANVRCGEMLLRRRNRQVIELSEQSDAQMRRVRGADIAMIFQEPMTSLNPVFTVGEQIAESIRLHQGASHEEALAEAKRMLDQVRIPESQAILSRYPHQLSGGMRQRVMIAMALSCRPAVLIADEPTTALDVTIQAQILQLIKVLQQEMSMGVIFITHDMGVVADIADRVLVMYQGEAVETGSVEQIFHAPTHPYTQTLLAAVPQLGAMRGHSLPRRFPLISADEPALYESQIEQDTVVEGEPILQVRGLVTRFPLRSGLFNRVTREVHAVENISFDLWPGETLSLVGESGSGKSTTGRALLRLVESRQGEIIFNGQRIDTLSAGKLQPLRRDIQCIFQDPYASLDPRQTVGYSIMEPLRIHGLGQGDAAAKRVAWLLERVGLRPEHAWRYPHEFSGGQRQRICIARALALNPKVIIADEAVSALDVSVRGQIINLLLDLQREMGIAYLFISHDMAVVERISHRVAVMYLGQIVEMGPRRAVFENPQHPYTRKLMAAVPVADPSRHRPRRVLLSDDIPSNIHKRGEETPAVSLQLVGPGHYVARPLQDNALSRL</sequence>
<accession>Q8ZQM4</accession>
<dbReference type="EC" id="7.4.2.10" evidence="1"/>
<dbReference type="EMBL" id="AE006468">
    <property type="protein sequence ID" value="AAL19784.1"/>
    <property type="molecule type" value="Genomic_DNA"/>
</dbReference>
<dbReference type="RefSeq" id="WP_001120598.1">
    <property type="nucleotide sequence ID" value="NC_003197.2"/>
</dbReference>
<dbReference type="SMR" id="Q8ZQM4"/>
<dbReference type="STRING" id="99287.STM0848"/>
<dbReference type="PaxDb" id="99287-STM0848"/>
<dbReference type="KEGG" id="stm:STM0848"/>
<dbReference type="PATRIC" id="fig|99287.12.peg.885"/>
<dbReference type="HOGENOM" id="CLU_000604_86_2_6"/>
<dbReference type="OMA" id="KSFPHEF"/>
<dbReference type="PhylomeDB" id="Q8ZQM4"/>
<dbReference type="BioCyc" id="SENT99287:STM0848-MONOMER"/>
<dbReference type="BRENDA" id="7.4.2.10">
    <property type="organism ID" value="5542"/>
</dbReference>
<dbReference type="Proteomes" id="UP000001014">
    <property type="component" value="Chromosome"/>
</dbReference>
<dbReference type="GO" id="GO:0005886">
    <property type="term" value="C:plasma membrane"/>
    <property type="evidence" value="ECO:0007669"/>
    <property type="project" value="UniProtKB-SubCell"/>
</dbReference>
<dbReference type="GO" id="GO:0005524">
    <property type="term" value="F:ATP binding"/>
    <property type="evidence" value="ECO:0007669"/>
    <property type="project" value="UniProtKB-KW"/>
</dbReference>
<dbReference type="GO" id="GO:0016887">
    <property type="term" value="F:ATP hydrolysis activity"/>
    <property type="evidence" value="ECO:0007669"/>
    <property type="project" value="InterPro"/>
</dbReference>
<dbReference type="GO" id="GO:0015833">
    <property type="term" value="P:peptide transport"/>
    <property type="evidence" value="ECO:0007669"/>
    <property type="project" value="InterPro"/>
</dbReference>
<dbReference type="GO" id="GO:0055085">
    <property type="term" value="P:transmembrane transport"/>
    <property type="evidence" value="ECO:0007669"/>
    <property type="project" value="UniProtKB-ARBA"/>
</dbReference>
<dbReference type="CDD" id="cd03257">
    <property type="entry name" value="ABC_NikE_OppD_transporters"/>
    <property type="match status" value="2"/>
</dbReference>
<dbReference type="FunFam" id="3.40.50.300:FF:000016">
    <property type="entry name" value="Oligopeptide ABC transporter ATP-binding component"/>
    <property type="match status" value="2"/>
</dbReference>
<dbReference type="Gene3D" id="3.40.50.300">
    <property type="entry name" value="P-loop containing nucleotide triphosphate hydrolases"/>
    <property type="match status" value="2"/>
</dbReference>
<dbReference type="InterPro" id="IPR003593">
    <property type="entry name" value="AAA+_ATPase"/>
</dbReference>
<dbReference type="InterPro" id="IPR050319">
    <property type="entry name" value="ABC_transp_ATP-bind"/>
</dbReference>
<dbReference type="InterPro" id="IPR003439">
    <property type="entry name" value="ABC_transporter-like_ATP-bd"/>
</dbReference>
<dbReference type="InterPro" id="IPR017871">
    <property type="entry name" value="ABC_transporter-like_CS"/>
</dbReference>
<dbReference type="InterPro" id="IPR013563">
    <property type="entry name" value="Oligopep_ABC_C"/>
</dbReference>
<dbReference type="InterPro" id="IPR027417">
    <property type="entry name" value="P-loop_NTPase"/>
</dbReference>
<dbReference type="NCBIfam" id="NF007613">
    <property type="entry name" value="PRK10261.1"/>
    <property type="match status" value="1"/>
</dbReference>
<dbReference type="NCBIfam" id="NF007739">
    <property type="entry name" value="PRK10419.1"/>
    <property type="match status" value="2"/>
</dbReference>
<dbReference type="NCBIfam" id="NF008453">
    <property type="entry name" value="PRK11308.1"/>
    <property type="match status" value="2"/>
</dbReference>
<dbReference type="PANTHER" id="PTHR43776:SF15">
    <property type="entry name" value="GLUTATHIONE IMPORT ATP-BINDING PROTEIN GSIA"/>
    <property type="match status" value="1"/>
</dbReference>
<dbReference type="PANTHER" id="PTHR43776">
    <property type="entry name" value="TRANSPORT ATP-BINDING PROTEIN"/>
    <property type="match status" value="1"/>
</dbReference>
<dbReference type="Pfam" id="PF00005">
    <property type="entry name" value="ABC_tran"/>
    <property type="match status" value="2"/>
</dbReference>
<dbReference type="Pfam" id="PF08352">
    <property type="entry name" value="oligo_HPY"/>
    <property type="match status" value="2"/>
</dbReference>
<dbReference type="SMART" id="SM00382">
    <property type="entry name" value="AAA"/>
    <property type="match status" value="2"/>
</dbReference>
<dbReference type="SUPFAM" id="SSF52540">
    <property type="entry name" value="P-loop containing nucleoside triphosphate hydrolases"/>
    <property type="match status" value="2"/>
</dbReference>
<dbReference type="PROSITE" id="PS00211">
    <property type="entry name" value="ABC_TRANSPORTER_1"/>
    <property type="match status" value="2"/>
</dbReference>
<dbReference type="PROSITE" id="PS50893">
    <property type="entry name" value="ABC_TRANSPORTER_2"/>
    <property type="match status" value="2"/>
</dbReference>
<organism>
    <name type="scientific">Salmonella typhimurium (strain LT2 / SGSC1412 / ATCC 700720)</name>
    <dbReference type="NCBI Taxonomy" id="99287"/>
    <lineage>
        <taxon>Bacteria</taxon>
        <taxon>Pseudomonadati</taxon>
        <taxon>Pseudomonadota</taxon>
        <taxon>Gammaproteobacteria</taxon>
        <taxon>Enterobacterales</taxon>
        <taxon>Enterobacteriaceae</taxon>
        <taxon>Salmonella</taxon>
    </lineage>
</organism>
<feature type="chain" id="PRO_0000280026" description="Glutathione import ATP-binding protein GsiA">
    <location>
        <begin position="1"/>
        <end position="623"/>
    </location>
</feature>
<feature type="domain" description="ABC transporter 1" evidence="2">
    <location>
        <begin position="15"/>
        <end position="269"/>
    </location>
</feature>
<feature type="domain" description="ABC transporter 2" evidence="2">
    <location>
        <begin position="325"/>
        <end position="564"/>
    </location>
</feature>
<feature type="binding site" evidence="2">
    <location>
        <begin position="49"/>
        <end position="56"/>
    </location>
    <ligand>
        <name>ATP</name>
        <dbReference type="ChEBI" id="CHEBI:30616"/>
    </ligand>
</feature>
<feature type="binding site" evidence="2">
    <location>
        <begin position="357"/>
        <end position="364"/>
    </location>
    <ligand>
        <name>ATP</name>
        <dbReference type="ChEBI" id="CHEBI:30616"/>
    </ligand>
</feature>
<comment type="function">
    <text evidence="1">Part of the ABC transporter complex GsiABCD involved in glutathione import. Responsible for energy coupling to the transport system.</text>
</comment>
<comment type="catalytic activity">
    <reaction evidence="1">
        <text>glutathione(out) + ATP + H2O = glutathione(in) + ADP + phosphate + H(+)</text>
        <dbReference type="Rhea" id="RHEA:29791"/>
        <dbReference type="ChEBI" id="CHEBI:15377"/>
        <dbReference type="ChEBI" id="CHEBI:15378"/>
        <dbReference type="ChEBI" id="CHEBI:30616"/>
        <dbReference type="ChEBI" id="CHEBI:43474"/>
        <dbReference type="ChEBI" id="CHEBI:57925"/>
        <dbReference type="ChEBI" id="CHEBI:456216"/>
        <dbReference type="EC" id="7.4.2.10"/>
    </reaction>
</comment>
<comment type="subunit">
    <text evidence="1">The complex is composed of two ATP-binding proteins (GsiA), two transmembrane proteins (GsiC and GsiD) and a solute-binding protein (GsiB).</text>
</comment>
<comment type="subcellular location">
    <subcellularLocation>
        <location evidence="1">Cell inner membrane</location>
        <topology evidence="1">Peripheral membrane protein</topology>
    </subcellularLocation>
</comment>
<comment type="similarity">
    <text evidence="3">Belongs to the ABC transporter superfamily. Glutathione importer (TC 3.A.1.5.11) family.</text>
</comment>
<gene>
    <name evidence="1" type="primary">gsiA</name>
    <name type="ordered locus">STM0848</name>
</gene>
<proteinExistence type="inferred from homology"/>
<reference key="1">
    <citation type="journal article" date="2001" name="Nature">
        <title>Complete genome sequence of Salmonella enterica serovar Typhimurium LT2.</title>
        <authorList>
            <person name="McClelland M."/>
            <person name="Sanderson K.E."/>
            <person name="Spieth J."/>
            <person name="Clifton S.W."/>
            <person name="Latreille P."/>
            <person name="Courtney L."/>
            <person name="Porwollik S."/>
            <person name="Ali J."/>
            <person name="Dante M."/>
            <person name="Du F."/>
            <person name="Hou S."/>
            <person name="Layman D."/>
            <person name="Leonard S."/>
            <person name="Nguyen C."/>
            <person name="Scott K."/>
            <person name="Holmes A."/>
            <person name="Grewal N."/>
            <person name="Mulvaney E."/>
            <person name="Ryan E."/>
            <person name="Sun H."/>
            <person name="Florea L."/>
            <person name="Miller W."/>
            <person name="Stoneking T."/>
            <person name="Nhan M."/>
            <person name="Waterston R."/>
            <person name="Wilson R.K."/>
        </authorList>
    </citation>
    <scope>NUCLEOTIDE SEQUENCE [LARGE SCALE GENOMIC DNA]</scope>
    <source>
        <strain>LT2 / SGSC1412 / ATCC 700720</strain>
    </source>
</reference>
<name>GSIA_SALTY</name>
<keyword id="KW-0067">ATP-binding</keyword>
<keyword id="KW-0997">Cell inner membrane</keyword>
<keyword id="KW-1003">Cell membrane</keyword>
<keyword id="KW-0378">Hydrolase</keyword>
<keyword id="KW-0472">Membrane</keyword>
<keyword id="KW-0547">Nucleotide-binding</keyword>
<keyword id="KW-1185">Reference proteome</keyword>
<keyword id="KW-0677">Repeat</keyword>
<keyword id="KW-1278">Translocase</keyword>
<keyword id="KW-0813">Transport</keyword>